<protein>
    <recommendedName>
        <fullName>Alkaline shock protein 23</fullName>
    </recommendedName>
</protein>
<name>ASP23_STAAS</name>
<proteinExistence type="inferred from homology"/>
<evidence type="ECO:0000250" key="1"/>
<evidence type="ECO:0000256" key="2">
    <source>
        <dbReference type="SAM" id="MobiDB-lite"/>
    </source>
</evidence>
<evidence type="ECO:0000305" key="3"/>
<comment type="function">
    <text evidence="1">May play a key role in alkaline pH tolerance.</text>
</comment>
<comment type="similarity">
    <text evidence="3">Belongs to the asp23 family.</text>
</comment>
<accession>Q6G7D2</accession>
<feature type="chain" id="PRO_0000170480" description="Alkaline shock protein 23">
    <location>
        <begin position="1"/>
        <end position="169"/>
    </location>
</feature>
<feature type="region of interest" description="Disordered" evidence="2">
    <location>
        <begin position="1"/>
        <end position="40"/>
    </location>
</feature>
<feature type="region of interest" description="Disordered" evidence="2">
    <location>
        <begin position="148"/>
        <end position="169"/>
    </location>
</feature>
<feature type="compositionally biased region" description="Basic and acidic residues" evidence="2">
    <location>
        <begin position="19"/>
        <end position="29"/>
    </location>
</feature>
<feature type="compositionally biased region" description="Basic and acidic residues" evidence="2">
    <location>
        <begin position="148"/>
        <end position="158"/>
    </location>
</feature>
<feature type="compositionally biased region" description="Low complexity" evidence="2">
    <location>
        <begin position="159"/>
        <end position="169"/>
    </location>
</feature>
<dbReference type="EMBL" id="BX571857">
    <property type="protein sequence ID" value="CAG43891.1"/>
    <property type="molecule type" value="Genomic_DNA"/>
</dbReference>
<dbReference type="RefSeq" id="WP_000215236.1">
    <property type="nucleotide sequence ID" value="NC_002953.3"/>
</dbReference>
<dbReference type="SMR" id="Q6G7D2"/>
<dbReference type="KEGG" id="sas:SAS2083"/>
<dbReference type="HOGENOM" id="CLU_113198_1_1_9"/>
<dbReference type="InterPro" id="IPR005531">
    <property type="entry name" value="Asp23"/>
</dbReference>
<dbReference type="PANTHER" id="PTHR34297:SF3">
    <property type="entry name" value="ALKALINE SHOCK PROTEIN 23"/>
    <property type="match status" value="1"/>
</dbReference>
<dbReference type="PANTHER" id="PTHR34297">
    <property type="entry name" value="HYPOTHETICAL CYTOSOLIC PROTEIN-RELATED"/>
    <property type="match status" value="1"/>
</dbReference>
<dbReference type="Pfam" id="PF03780">
    <property type="entry name" value="Asp23"/>
    <property type="match status" value="1"/>
</dbReference>
<gene>
    <name type="primary">asp23</name>
    <name type="ordered locus">SAS2083</name>
</gene>
<organism>
    <name type="scientific">Staphylococcus aureus (strain MSSA476)</name>
    <dbReference type="NCBI Taxonomy" id="282459"/>
    <lineage>
        <taxon>Bacteria</taxon>
        <taxon>Bacillati</taxon>
        <taxon>Bacillota</taxon>
        <taxon>Bacilli</taxon>
        <taxon>Bacillales</taxon>
        <taxon>Staphylococcaceae</taxon>
        <taxon>Staphylococcus</taxon>
    </lineage>
</organism>
<reference key="1">
    <citation type="journal article" date="2004" name="Proc. Natl. Acad. Sci. U.S.A.">
        <title>Complete genomes of two clinical Staphylococcus aureus strains: evidence for the rapid evolution of virulence and drug resistance.</title>
        <authorList>
            <person name="Holden M.T.G."/>
            <person name="Feil E.J."/>
            <person name="Lindsay J.A."/>
            <person name="Peacock S.J."/>
            <person name="Day N.P.J."/>
            <person name="Enright M.C."/>
            <person name="Foster T.J."/>
            <person name="Moore C.E."/>
            <person name="Hurst L."/>
            <person name="Atkin R."/>
            <person name="Barron A."/>
            <person name="Bason N."/>
            <person name="Bentley S.D."/>
            <person name="Chillingworth C."/>
            <person name="Chillingworth T."/>
            <person name="Churcher C."/>
            <person name="Clark L."/>
            <person name="Corton C."/>
            <person name="Cronin A."/>
            <person name="Doggett J."/>
            <person name="Dowd L."/>
            <person name="Feltwell T."/>
            <person name="Hance Z."/>
            <person name="Harris B."/>
            <person name="Hauser H."/>
            <person name="Holroyd S."/>
            <person name="Jagels K."/>
            <person name="James K.D."/>
            <person name="Lennard N."/>
            <person name="Line A."/>
            <person name="Mayes R."/>
            <person name="Moule S."/>
            <person name="Mungall K."/>
            <person name="Ormond D."/>
            <person name="Quail M.A."/>
            <person name="Rabbinowitsch E."/>
            <person name="Rutherford K.M."/>
            <person name="Sanders M."/>
            <person name="Sharp S."/>
            <person name="Simmonds M."/>
            <person name="Stevens K."/>
            <person name="Whitehead S."/>
            <person name="Barrell B.G."/>
            <person name="Spratt B.G."/>
            <person name="Parkhill J."/>
        </authorList>
    </citation>
    <scope>NUCLEOTIDE SEQUENCE [LARGE SCALE GENOMIC DNA]</scope>
    <source>
        <strain>MSSA476</strain>
    </source>
</reference>
<sequence length="169" mass="19191">MTVDNNKAKQAYDNQTGVNEKEREERQKQQEQNQEPQFKNKLTFSDEVVEKIAGIAAREVKGILDMKGGLTDTFTNAFSSGNNVTQGVSVEVGEKQAAVDLKVILEYGESAPKIFRKVTELVKEQVKYITGLDVVEVNMQVDDVMTQKEWKQKHEKNNENNNQERQGLQ</sequence>